<evidence type="ECO:0000250" key="1">
    <source>
        <dbReference type="UniProtKB" id="Q99496"/>
    </source>
</evidence>
<evidence type="ECO:0000250" key="2">
    <source>
        <dbReference type="UniProtKB" id="Q9CQJ4"/>
    </source>
</evidence>
<evidence type="ECO:0000255" key="3">
    <source>
        <dbReference type="PROSITE-ProRule" id="PRU00175"/>
    </source>
</evidence>
<evidence type="ECO:0000256" key="4">
    <source>
        <dbReference type="SAM" id="MobiDB-lite"/>
    </source>
</evidence>
<evidence type="ECO:0000305" key="5"/>
<feature type="initiator methionine" description="Removed" evidence="1">
    <location>
        <position position="1"/>
    </location>
</feature>
<feature type="chain" id="PRO_0000056040" description="E3 ubiquitin-protein ligase RING2">
    <location>
        <begin position="2"/>
        <end position="336"/>
    </location>
</feature>
<feature type="zinc finger region" description="RING-type" evidence="3">
    <location>
        <begin position="51"/>
        <end position="91"/>
    </location>
</feature>
<feature type="region of interest" description="Interaction with HIP2" evidence="1">
    <location>
        <begin position="2"/>
        <end position="179"/>
    </location>
</feature>
<feature type="region of interest" description="Interaction with nucleosomes via an acidic patch on histone H2A and histone H2B" evidence="1">
    <location>
        <begin position="93"/>
        <end position="98"/>
    </location>
</feature>
<feature type="region of interest" description="Disordered" evidence="4">
    <location>
        <begin position="157"/>
        <end position="213"/>
    </location>
</feature>
<feature type="compositionally biased region" description="Polar residues" evidence="4">
    <location>
        <begin position="176"/>
        <end position="191"/>
    </location>
</feature>
<feature type="modified residue" description="N-acetylserine" evidence="1">
    <location>
        <position position="2"/>
    </location>
</feature>
<feature type="modified residue" description="Phosphoserine" evidence="1">
    <location>
        <position position="41"/>
    </location>
</feature>
<feature type="modified residue" description="Phosphoserine" evidence="1">
    <location>
        <position position="143"/>
    </location>
</feature>
<feature type="modified residue" description="Phosphoserine" evidence="1">
    <location>
        <position position="168"/>
    </location>
</feature>
<feature type="cross-link" description="Glycyl lysine isopeptide (Lys-Gly) (interchain with G-Cter in ubiquitin)" evidence="2">
    <location>
        <position position="112"/>
    </location>
</feature>
<feature type="cross-link" description="Glycyl lysine isopeptide (Lys-Gly) (interchain with G-Cter in SUMO2)" evidence="1">
    <location>
        <position position="249"/>
    </location>
</feature>
<feature type="cross-link" description="Glycyl lysine isopeptide (Lys-Gly) (interchain with G-Cter in SUMO2)" evidence="1">
    <location>
        <position position="323"/>
    </location>
</feature>
<organism>
    <name type="scientific">Pongo abelii</name>
    <name type="common">Sumatran orangutan</name>
    <name type="synonym">Pongo pygmaeus abelii</name>
    <dbReference type="NCBI Taxonomy" id="9601"/>
    <lineage>
        <taxon>Eukaryota</taxon>
        <taxon>Metazoa</taxon>
        <taxon>Chordata</taxon>
        <taxon>Craniata</taxon>
        <taxon>Vertebrata</taxon>
        <taxon>Euteleostomi</taxon>
        <taxon>Mammalia</taxon>
        <taxon>Eutheria</taxon>
        <taxon>Euarchontoglires</taxon>
        <taxon>Primates</taxon>
        <taxon>Haplorrhini</taxon>
        <taxon>Catarrhini</taxon>
        <taxon>Hominidae</taxon>
        <taxon>Pongo</taxon>
    </lineage>
</organism>
<dbReference type="EC" id="2.3.2.27" evidence="1"/>
<dbReference type="EMBL" id="CR859392">
    <property type="protein sequence ID" value="CAH91565.1"/>
    <property type="molecule type" value="mRNA"/>
</dbReference>
<dbReference type="RefSeq" id="NP_001127433.1">
    <property type="nucleotide sequence ID" value="NM_001133961.1"/>
</dbReference>
<dbReference type="BMRB" id="Q5R9J5"/>
<dbReference type="SMR" id="Q5R9J5"/>
<dbReference type="FunCoup" id="Q5R9J5">
    <property type="interactions" value="3582"/>
</dbReference>
<dbReference type="STRING" id="9601.ENSPPYP00000000473"/>
<dbReference type="GeneID" id="100174504"/>
<dbReference type="KEGG" id="pon:100174504"/>
<dbReference type="CTD" id="6045"/>
<dbReference type="eggNOG" id="KOG0311">
    <property type="taxonomic scope" value="Eukaryota"/>
</dbReference>
<dbReference type="InParanoid" id="Q5R9J5"/>
<dbReference type="OrthoDB" id="337575at2759"/>
<dbReference type="UniPathway" id="UPA00143"/>
<dbReference type="Proteomes" id="UP000001595">
    <property type="component" value="Unplaced"/>
</dbReference>
<dbReference type="GO" id="GO:0005694">
    <property type="term" value="C:chromosome"/>
    <property type="evidence" value="ECO:0007669"/>
    <property type="project" value="UniProtKB-SubCell"/>
</dbReference>
<dbReference type="GO" id="GO:0005737">
    <property type="term" value="C:cytoplasm"/>
    <property type="evidence" value="ECO:0000250"/>
    <property type="project" value="UniProtKB"/>
</dbReference>
<dbReference type="GO" id="GO:0071339">
    <property type="term" value="C:MLL1 complex"/>
    <property type="evidence" value="ECO:0000250"/>
    <property type="project" value="UniProtKB"/>
</dbReference>
<dbReference type="GO" id="GO:0005634">
    <property type="term" value="C:nucleus"/>
    <property type="evidence" value="ECO:0000250"/>
    <property type="project" value="UniProtKB"/>
</dbReference>
<dbReference type="GO" id="GO:0031519">
    <property type="term" value="C:PcG protein complex"/>
    <property type="evidence" value="ECO:0000250"/>
    <property type="project" value="UniProtKB"/>
</dbReference>
<dbReference type="GO" id="GO:0035102">
    <property type="term" value="C:PRC1 complex"/>
    <property type="evidence" value="ECO:0000250"/>
    <property type="project" value="UniProtKB"/>
</dbReference>
<dbReference type="GO" id="GO:0000151">
    <property type="term" value="C:ubiquitin ligase complex"/>
    <property type="evidence" value="ECO:0000250"/>
    <property type="project" value="UniProtKB"/>
</dbReference>
<dbReference type="GO" id="GO:0003682">
    <property type="term" value="F:chromatin binding"/>
    <property type="evidence" value="ECO:0007669"/>
    <property type="project" value="TreeGrafter"/>
</dbReference>
<dbReference type="GO" id="GO:0140862">
    <property type="term" value="F:histone H2AK119 ubiquitin ligase activity"/>
    <property type="evidence" value="ECO:0000250"/>
    <property type="project" value="UniProtKB"/>
</dbReference>
<dbReference type="GO" id="GO:0061630">
    <property type="term" value="F:ubiquitin protein ligase activity"/>
    <property type="evidence" value="ECO:0000250"/>
    <property type="project" value="UniProtKB"/>
</dbReference>
<dbReference type="GO" id="GO:0008270">
    <property type="term" value="F:zinc ion binding"/>
    <property type="evidence" value="ECO:0000250"/>
    <property type="project" value="UniProtKB"/>
</dbReference>
<dbReference type="GO" id="GO:0040029">
    <property type="term" value="P:epigenetic regulation of gene expression"/>
    <property type="evidence" value="ECO:0000250"/>
    <property type="project" value="UniProtKB"/>
</dbReference>
<dbReference type="GO" id="GO:0000122">
    <property type="term" value="P:negative regulation of transcription by RNA polymerase II"/>
    <property type="evidence" value="ECO:0000250"/>
    <property type="project" value="UniProtKB"/>
</dbReference>
<dbReference type="GO" id="GO:0016567">
    <property type="term" value="P:protein ubiquitination"/>
    <property type="evidence" value="ECO:0007669"/>
    <property type="project" value="UniProtKB-UniPathway"/>
</dbReference>
<dbReference type="CDD" id="cd17167">
    <property type="entry name" value="RAWUL_RING2"/>
    <property type="match status" value="1"/>
</dbReference>
<dbReference type="CDD" id="cd16740">
    <property type="entry name" value="RING-HC_RING2"/>
    <property type="match status" value="1"/>
</dbReference>
<dbReference type="FunFam" id="3.10.20.90:FF:000067">
    <property type="entry name" value="E3 ubiquitin-protein ligase RING2"/>
    <property type="match status" value="1"/>
</dbReference>
<dbReference type="FunFam" id="3.30.40.10:FF:000100">
    <property type="entry name" value="E3 ubiquitin-protein ligase RING2"/>
    <property type="match status" value="1"/>
</dbReference>
<dbReference type="Gene3D" id="3.10.20.90">
    <property type="entry name" value="Phosphatidylinositol 3-kinase Catalytic Subunit, Chain A, domain 1"/>
    <property type="match status" value="1"/>
</dbReference>
<dbReference type="Gene3D" id="3.30.40.10">
    <property type="entry name" value="Zinc/RING finger domain, C3HC4 (zinc finger)"/>
    <property type="match status" value="1"/>
</dbReference>
<dbReference type="InterPro" id="IPR032443">
    <property type="entry name" value="RAWUL"/>
</dbReference>
<dbReference type="InterPro" id="IPR043540">
    <property type="entry name" value="RING1/RING2"/>
</dbReference>
<dbReference type="InterPro" id="IPR037937">
    <property type="entry name" value="RING2_RAWUL_dom"/>
</dbReference>
<dbReference type="InterPro" id="IPR001841">
    <property type="entry name" value="Znf_RING"/>
</dbReference>
<dbReference type="InterPro" id="IPR013083">
    <property type="entry name" value="Znf_RING/FYVE/PHD"/>
</dbReference>
<dbReference type="InterPro" id="IPR017907">
    <property type="entry name" value="Znf_RING_CS"/>
</dbReference>
<dbReference type="PANTHER" id="PTHR46076">
    <property type="entry name" value="E3 UBIQUITIN-PROTEIN LIGASE RING1 / RING 2 FAMILY MEMBER"/>
    <property type="match status" value="1"/>
</dbReference>
<dbReference type="PANTHER" id="PTHR46076:SF4">
    <property type="entry name" value="E3 UBIQUITIN-PROTEIN LIGASE RING2"/>
    <property type="match status" value="1"/>
</dbReference>
<dbReference type="Pfam" id="PF16207">
    <property type="entry name" value="RAWUL"/>
    <property type="match status" value="1"/>
</dbReference>
<dbReference type="Pfam" id="PF13923">
    <property type="entry name" value="zf-C3HC4_2"/>
    <property type="match status" value="1"/>
</dbReference>
<dbReference type="SMART" id="SM00184">
    <property type="entry name" value="RING"/>
    <property type="match status" value="1"/>
</dbReference>
<dbReference type="SUPFAM" id="SSF57850">
    <property type="entry name" value="RING/U-box"/>
    <property type="match status" value="1"/>
</dbReference>
<dbReference type="PROSITE" id="PS00518">
    <property type="entry name" value="ZF_RING_1"/>
    <property type="match status" value="1"/>
</dbReference>
<dbReference type="PROSITE" id="PS50089">
    <property type="entry name" value="ZF_RING_2"/>
    <property type="match status" value="1"/>
</dbReference>
<name>RING2_PONAB</name>
<reference key="1">
    <citation type="submission" date="2004-11" db="EMBL/GenBank/DDBJ databases">
        <authorList>
            <consortium name="The German cDNA consortium"/>
        </authorList>
    </citation>
    <scope>NUCLEOTIDE SEQUENCE [LARGE SCALE MRNA]</scope>
    <source>
        <tissue>Kidney</tissue>
    </source>
</reference>
<protein>
    <recommendedName>
        <fullName>E3 ubiquitin-protein ligase RING2</fullName>
        <ecNumber evidence="1">2.3.2.27</ecNumber>
    </recommendedName>
    <alternativeName>
        <fullName>RING finger protein 1B</fullName>
        <shortName>RING1b</shortName>
    </alternativeName>
    <alternativeName>
        <fullName>RING finger protein 2</fullName>
    </alternativeName>
    <alternativeName>
        <fullName evidence="5">RING-type E3 ubiquitin transferase RING2</fullName>
    </alternativeName>
</protein>
<comment type="function">
    <text evidence="2">E3 ubiquitin-protein ligase that mediates monoubiquitination of 'Lys-119' of histone H2A (H2AK119Ub), thereby playing a central role in histone code and gene regulation. H2AK119Ub gives a specific tag for epigenetic transcriptional repression and participates in X chromosome inactivation of female mammals. May be involved in the initiation of both imprinted and random X inactivation. Essential component of a Polycomb group (PcG) multiprotein PRC1-like complex, a complex class required to maintain the transcriptionally repressive state of many genes, including Hox genes, throughout development. PcG PRC1 complex acts via chromatin remodeling and modification of histones, rendering chromatin heritably changed in its expressibility. E3 ubiquitin-protein ligase activity is enhanced by BMI1/PCGF4. Acts as the main E3 ubiquitin ligase on histone H2A of the PRC1 complex, while RING1 may rather act as a modulator of RNF2/RING2 activity. Plays a role in the transcriptional repression of genes that are required for pluripotency in embryonic stem cells, thereby contributing to differentiation of the ectodermal and endodermal germ layers. Association with the chromosomal DNA is cell-cycle dependent. In resting B- and T-lymphocytes, interaction with AURKB leads to block its activity, thereby maintaining transcription in resting lymphocytes. Also acts as a negative regulator of autophagy by mediating ubiquitination of AMBRA1, leading to its subsequent degradation.</text>
</comment>
<comment type="catalytic activity">
    <reaction evidence="1">
        <text>S-ubiquitinyl-[E2 ubiquitin-conjugating enzyme]-L-cysteine + [acceptor protein]-L-lysine = [E2 ubiquitin-conjugating enzyme]-L-cysteine + N(6)-ubiquitinyl-[acceptor protein]-L-lysine.</text>
        <dbReference type="EC" id="2.3.2.27"/>
    </reaction>
</comment>
<comment type="pathway">
    <text evidence="1">Protein modification; protein ubiquitination.</text>
</comment>
<comment type="subunit">
    <text evidence="1 2">Component of chromatin-associated Polycomb (PcG) complexes. Component of a number of PRC1-like complexes; these complexes contain either the polycomb group ring finger protein PCGF1, or PCGF2, or PCGF3, or BMI1, or PCGF5, or PCGF6. Distinct PRC1-like complexes are composed of a RING1 subunit (RING1B or RING1A), one of the six PCGF proteins (PCGF1, PCGF2, PCGF3, BMI1, PCGF5 or PCGF6), one PHC protein (PHC1, PHC2 or PHC3) and one of the CBX proteins (CBX2, CBX4, CBX6, CBX7 or CBX8) (By similarity). Part of a complex that contains RNF2, UB2D3 and BMI1; within that complex RNF2 and BMI1 form a tight heterodimer, where UB2D3 interacts only with RNF2. The complex composed of RNF2, UB2D3 and BMI1 binds nucleosomes, and has activity only with nucleosomal histone H2A (By similarity). Part of a complex that contains PCGF5, RNF2 and UBE2D3. Part of a complex that contains AUTS2, PCGF5, RNF2, CSNK2B and RYBP (By similarity). Interacts with CBX6 and CBX8 (By similarity). Interacts with PHC1, PCGF2, RYBP, CBX7, CBX4, CBX2, RNF1/RING1, BMI1 and PHC2. Interaction with RYBP and CBX7 is mutually exclusive; both compete for the same binding site on RNF2 (By similarity). Component of repressive BCOR complex containing a Polycomb group subcomplex at least composed of RYBP, PCGF1, BCOR and RING1 (By similarity). Interacts with CBX2 and PHC1. Interacts with CHTOP. Interacts with AURKB (By similarity). Part of the E2F6.com-1 complex in G0 phase composed of E2F6, MGA, MAX, TFDP1, CBX3, BAT8, EUHMTASE1, RNF1/RING1, RNF2/RING2, MBLR, L3MBTL2 and YAF2 (By similarity). Component of some MLL1/MLL complex, at least composed of the core components KMT2A/MLL1, ASH2L, HCFC1/HCF1, WDR5 and RBBP5, as well as the facultative components BACC1, CHD8, E2F6, HSP70, INO80C, KANSL1, LAS1L, MAX, MCRS1, MGA, MYST1/MOF, PELP1, PHF20, PRP31, RING2, RUVB1/TIP49A, RUVB2/TIP49B, SENP3, TAF1, TAF4, TAF6, TAF7, TAF9 and TEX10. Interacts with RYBP, HIP2 and TFCP2 (By similarity). Interacts with NUPR1 (By similarity). Interacts with SAMD7 in a PHC2-dependent manner (By similarity).</text>
</comment>
<comment type="subcellular location">
    <subcellularLocation>
        <location evidence="2">Nucleus</location>
    </subcellularLocation>
    <subcellularLocation>
        <location evidence="2">Cytoplasm</location>
    </subcellularLocation>
    <subcellularLocation>
        <location evidence="2">Chromosome</location>
    </subcellularLocation>
    <text evidence="2">Enriched on inactive X chromosome (Xi) in female trophoblast stem (TS) cells as well as differentiating embryonic stem (ES) cells. The enrichment on Xi is transient during TS and ES cell differentiation. The association with Xi is mitotically stable in non-differentiated TS cells. Co-localizes with SAMD7 in nuclear polycomb bodies.</text>
</comment>
<comment type="PTM">
    <text evidence="1 2">Monoubiquitinated, by auto-ubiquitination (By similarity). Polyubiquitinated in the presence of UBE2D3 (in vitro) (By similarity).</text>
</comment>
<keyword id="KW-0007">Acetylation</keyword>
<keyword id="KW-0158">Chromosome</keyword>
<keyword id="KW-0963">Cytoplasm</keyword>
<keyword id="KW-1017">Isopeptide bond</keyword>
<keyword id="KW-0479">Metal-binding</keyword>
<keyword id="KW-0539">Nucleus</keyword>
<keyword id="KW-0597">Phosphoprotein</keyword>
<keyword id="KW-1185">Reference proteome</keyword>
<keyword id="KW-0678">Repressor</keyword>
<keyword id="KW-0804">Transcription</keyword>
<keyword id="KW-0805">Transcription regulation</keyword>
<keyword id="KW-0808">Transferase</keyword>
<keyword id="KW-0832">Ubl conjugation</keyword>
<keyword id="KW-0833">Ubl conjugation pathway</keyword>
<keyword id="KW-0862">Zinc</keyword>
<keyword id="KW-0863">Zinc-finger</keyword>
<sequence length="336" mass="37639">MSQAVQTNGTQPLSKTWELSLYELQRTPQEAITDGLEIVVSPRSLHSELMCPICLDMLKNTMTTKECLHRFCADCIITALRSGNKECPTCRKKLVSKRSLRPDPNFDALISKIYPSRDEYEAHQERVLARINKHNNQQALSHSIEEGLKIQAMNRLQRGKKQQIENGSGAEDNGDSSHCSNASTHSNQEAGPSNKRTKTSDDSGLEPDNNNAAMAIDPVMDGASEIELVFRPHPTLMEKDDSAQTRYIKTSGNATVDHLSKYLAVRLALEELRSKGESNQMNLDTASEKQYTIYIATASGQFTVLNGSFSLELVSEKYWKVNKPMELYYAPTKEHK</sequence>
<proteinExistence type="evidence at transcript level"/>
<accession>Q5R9J5</accession>
<gene>
    <name type="primary">RNF2</name>
    <name type="synonym">RING1B</name>
</gene>